<sequence>MDIIFYHPTFDTQWWIEALRKAIPQARVRAWKSGDNDSADYALAWHPPVEMLAGRDLKAVFALGAGVDSILSKLQAHPEMLKPSVPLFRLEDTGMGEQMQEYAVSQVLHWFRRFDDYRIQQNSSHWQPLPEYHREDFTIGILGAGVLGSKVAQSLQTWRFPLRCWSRTRKSWPGVQSFAGWEELSAFLSQCRVLINLLPNTPETVGIINQQLLEKLPDGAYLLNLARGVHVVEDDLLAALDSGKVKGAMLDVFNREPLPPESPLWQHPRVTITPHVAAITRPAEAVEYISRTIAQLEKGERVCGQVDRARGY</sequence>
<reference key="1">
    <citation type="journal article" date="2011" name="Proc. Natl. Acad. Sci. U.S.A.">
        <title>Genomic anatomy of Escherichia coli O157:H7 outbreaks.</title>
        <authorList>
            <person name="Eppinger M."/>
            <person name="Mammel M.K."/>
            <person name="Leclerc J.E."/>
            <person name="Ravel J."/>
            <person name="Cebula T.A."/>
        </authorList>
    </citation>
    <scope>NUCLEOTIDE SEQUENCE [LARGE SCALE GENOMIC DNA]</scope>
    <source>
        <strain>EC4115 / EHEC</strain>
    </source>
</reference>
<feature type="chain" id="PRO_1000187265" description="Glyoxylate/hydroxypyruvate reductase A">
    <location>
        <begin position="1"/>
        <end position="312"/>
    </location>
</feature>
<feature type="active site" evidence="1">
    <location>
        <position position="227"/>
    </location>
</feature>
<feature type="active site" description="Proton donor" evidence="1">
    <location>
        <position position="275"/>
    </location>
</feature>
<keyword id="KW-0963">Cytoplasm</keyword>
<keyword id="KW-0520">NAD</keyword>
<keyword id="KW-0521">NADP</keyword>
<keyword id="KW-0560">Oxidoreductase</keyword>
<name>GHRA_ECO5E</name>
<comment type="function">
    <text evidence="1">Catalyzes the NADPH-dependent reduction of glyoxylate and hydroxypyruvate into glycolate and glycerate, respectively.</text>
</comment>
<comment type="catalytic activity">
    <reaction evidence="1">
        <text>glycolate + NADP(+) = glyoxylate + NADPH + H(+)</text>
        <dbReference type="Rhea" id="RHEA:10992"/>
        <dbReference type="ChEBI" id="CHEBI:15378"/>
        <dbReference type="ChEBI" id="CHEBI:29805"/>
        <dbReference type="ChEBI" id="CHEBI:36655"/>
        <dbReference type="ChEBI" id="CHEBI:57783"/>
        <dbReference type="ChEBI" id="CHEBI:58349"/>
        <dbReference type="EC" id="1.1.1.79"/>
    </reaction>
</comment>
<comment type="catalytic activity">
    <reaction evidence="1">
        <text>(R)-glycerate + NAD(+) = 3-hydroxypyruvate + NADH + H(+)</text>
        <dbReference type="Rhea" id="RHEA:17905"/>
        <dbReference type="ChEBI" id="CHEBI:15378"/>
        <dbReference type="ChEBI" id="CHEBI:16659"/>
        <dbReference type="ChEBI" id="CHEBI:17180"/>
        <dbReference type="ChEBI" id="CHEBI:57540"/>
        <dbReference type="ChEBI" id="CHEBI:57945"/>
        <dbReference type="EC" id="1.1.1.81"/>
    </reaction>
</comment>
<comment type="catalytic activity">
    <reaction evidence="1">
        <text>(R)-glycerate + NADP(+) = 3-hydroxypyruvate + NADPH + H(+)</text>
        <dbReference type="Rhea" id="RHEA:18657"/>
        <dbReference type="ChEBI" id="CHEBI:15378"/>
        <dbReference type="ChEBI" id="CHEBI:16659"/>
        <dbReference type="ChEBI" id="CHEBI:17180"/>
        <dbReference type="ChEBI" id="CHEBI:57783"/>
        <dbReference type="ChEBI" id="CHEBI:58349"/>
        <dbReference type="EC" id="1.1.1.81"/>
    </reaction>
</comment>
<comment type="subcellular location">
    <subcellularLocation>
        <location evidence="1">Cytoplasm</location>
    </subcellularLocation>
</comment>
<comment type="similarity">
    <text evidence="1">Belongs to the D-isomer specific 2-hydroxyacid dehydrogenase family. GhrA subfamily.</text>
</comment>
<proteinExistence type="inferred from homology"/>
<accession>B5YVQ3</accession>
<evidence type="ECO:0000255" key="1">
    <source>
        <dbReference type="HAMAP-Rule" id="MF_01666"/>
    </source>
</evidence>
<protein>
    <recommendedName>
        <fullName evidence="1">Glyoxylate/hydroxypyruvate reductase A</fullName>
        <ecNumber evidence="1">1.1.1.79</ecNumber>
        <ecNumber evidence="1">1.1.1.81</ecNumber>
    </recommendedName>
    <alternativeName>
        <fullName evidence="1">2-ketoacid reductase</fullName>
    </alternativeName>
</protein>
<dbReference type="EC" id="1.1.1.79" evidence="1"/>
<dbReference type="EC" id="1.1.1.81" evidence="1"/>
<dbReference type="EMBL" id="CP001164">
    <property type="protein sequence ID" value="ACI38598.1"/>
    <property type="molecule type" value="Genomic_DNA"/>
</dbReference>
<dbReference type="RefSeq" id="WP_000351284.1">
    <property type="nucleotide sequence ID" value="NC_011353.1"/>
</dbReference>
<dbReference type="SMR" id="B5YVQ3"/>
<dbReference type="KEGG" id="ecf:ECH74115_1411"/>
<dbReference type="HOGENOM" id="CLU_019796_1_0_6"/>
<dbReference type="GO" id="GO:0005829">
    <property type="term" value="C:cytosol"/>
    <property type="evidence" value="ECO:0007669"/>
    <property type="project" value="UniProtKB-ARBA"/>
</dbReference>
<dbReference type="GO" id="GO:0030267">
    <property type="term" value="F:glyoxylate reductase (NADPH) activity"/>
    <property type="evidence" value="ECO:0007669"/>
    <property type="project" value="UniProtKB-UniRule"/>
</dbReference>
<dbReference type="GO" id="GO:0008465">
    <property type="term" value="F:hydroxypyruvate reductase (NADH) activity"/>
    <property type="evidence" value="ECO:0007669"/>
    <property type="project" value="RHEA"/>
</dbReference>
<dbReference type="GO" id="GO:0120509">
    <property type="term" value="F:hydroxypyruvate reductase (NADPH) activity"/>
    <property type="evidence" value="ECO:0007669"/>
    <property type="project" value="RHEA"/>
</dbReference>
<dbReference type="GO" id="GO:0051287">
    <property type="term" value="F:NAD binding"/>
    <property type="evidence" value="ECO:0007669"/>
    <property type="project" value="InterPro"/>
</dbReference>
<dbReference type="CDD" id="cd12164">
    <property type="entry name" value="GDH_like_2"/>
    <property type="match status" value="1"/>
</dbReference>
<dbReference type="FunFam" id="3.40.50.720:FF:000110">
    <property type="entry name" value="Glyoxylate/hydroxypyruvate reductase A"/>
    <property type="match status" value="1"/>
</dbReference>
<dbReference type="Gene3D" id="3.40.50.720">
    <property type="entry name" value="NAD(P)-binding Rossmann-like Domain"/>
    <property type="match status" value="2"/>
</dbReference>
<dbReference type="HAMAP" id="MF_01666">
    <property type="entry name" value="2_Hacid_dh_C_GhrA"/>
    <property type="match status" value="1"/>
</dbReference>
<dbReference type="InterPro" id="IPR029753">
    <property type="entry name" value="D-isomer_DH_CS"/>
</dbReference>
<dbReference type="InterPro" id="IPR006140">
    <property type="entry name" value="D-isomer_DH_NAD-bd"/>
</dbReference>
<dbReference type="InterPro" id="IPR023514">
    <property type="entry name" value="GhrA_Enterobacterales"/>
</dbReference>
<dbReference type="InterPro" id="IPR036291">
    <property type="entry name" value="NAD(P)-bd_dom_sf"/>
</dbReference>
<dbReference type="NCBIfam" id="NF012013">
    <property type="entry name" value="PRK15469.1"/>
    <property type="match status" value="1"/>
</dbReference>
<dbReference type="PANTHER" id="PTHR43333">
    <property type="entry name" value="2-HACID_DH_C DOMAIN-CONTAINING PROTEIN"/>
    <property type="match status" value="1"/>
</dbReference>
<dbReference type="PANTHER" id="PTHR43333:SF1">
    <property type="entry name" value="D-ISOMER SPECIFIC 2-HYDROXYACID DEHYDROGENASE NAD-BINDING DOMAIN-CONTAINING PROTEIN"/>
    <property type="match status" value="1"/>
</dbReference>
<dbReference type="Pfam" id="PF02826">
    <property type="entry name" value="2-Hacid_dh_C"/>
    <property type="match status" value="1"/>
</dbReference>
<dbReference type="SUPFAM" id="SSF51735">
    <property type="entry name" value="NAD(P)-binding Rossmann-fold domains"/>
    <property type="match status" value="1"/>
</dbReference>
<dbReference type="PROSITE" id="PS00671">
    <property type="entry name" value="D_2_HYDROXYACID_DH_3"/>
    <property type="match status" value="1"/>
</dbReference>
<gene>
    <name evidence="1" type="primary">ghrA</name>
    <name type="ordered locus">ECH74115_1411</name>
</gene>
<organism>
    <name type="scientific">Escherichia coli O157:H7 (strain EC4115 / EHEC)</name>
    <dbReference type="NCBI Taxonomy" id="444450"/>
    <lineage>
        <taxon>Bacteria</taxon>
        <taxon>Pseudomonadati</taxon>
        <taxon>Pseudomonadota</taxon>
        <taxon>Gammaproteobacteria</taxon>
        <taxon>Enterobacterales</taxon>
        <taxon>Enterobacteriaceae</taxon>
        <taxon>Escherichia</taxon>
    </lineage>
</organism>